<feature type="chain" id="PRO_0000039384" description="Phosphoprotein">
    <location>
        <begin position="1"/>
        <end position="395"/>
    </location>
</feature>
<feature type="region of interest" description="Disordered" evidence="4">
    <location>
        <begin position="31"/>
        <end position="109"/>
    </location>
</feature>
<feature type="region of interest" description="Disordered" evidence="4">
    <location>
        <begin position="126"/>
        <end position="214"/>
    </location>
</feature>
<feature type="region of interest" description="Multimerization" evidence="3">
    <location>
        <begin position="222"/>
        <end position="285"/>
    </location>
</feature>
<feature type="compositionally biased region" description="Basic and acidic residues" evidence="4">
    <location>
        <begin position="65"/>
        <end position="74"/>
    </location>
</feature>
<feature type="compositionally biased region" description="Polar residues" evidence="4">
    <location>
        <begin position="75"/>
        <end position="98"/>
    </location>
</feature>
<feature type="compositionally biased region" description="Polar residues" evidence="4">
    <location>
        <begin position="146"/>
        <end position="168"/>
    </location>
</feature>
<feature type="compositionally biased region" description="Polar residues" evidence="4">
    <location>
        <begin position="203"/>
        <end position="212"/>
    </location>
</feature>
<feature type="splice variant" id="VSP_018976" description="In isoform 29 kDa." evidence="5">
    <location>
        <begin position="1"/>
        <end position="119"/>
    </location>
</feature>
<feature type="splice variant" id="VSP_018975" description="In isoform 38 kDa." evidence="5">
    <location>
        <begin position="1"/>
        <end position="81"/>
    </location>
</feature>
<protein>
    <recommendedName>
        <fullName>Phosphoprotein</fullName>
        <shortName>Protein P</shortName>
    </recommendedName>
    <alternativeName>
        <fullName>Non-structural protein C, 38 kDa/29 kDa</fullName>
    </alternativeName>
</protein>
<organismHost>
    <name type="scientific">Gallus gallus</name>
    <name type="common">Chicken</name>
    <dbReference type="NCBI Taxonomy" id="9031"/>
</organismHost>
<keyword id="KW-0024">Alternative initiation</keyword>
<keyword id="KW-0597">Phosphoprotein</keyword>
<keyword id="KW-0693">Viral RNA replication</keyword>
<dbReference type="EMBL" id="M20302">
    <property type="protein sequence ID" value="AAA66628.1"/>
    <property type="molecule type" value="Genomic_RNA"/>
</dbReference>
<dbReference type="PIR" id="A28613">
    <property type="entry name" value="RRNZND"/>
</dbReference>
<dbReference type="SMR" id="P16073"/>
<dbReference type="CDD" id="cd21031">
    <property type="entry name" value="MEV_P-protein-C_like"/>
    <property type="match status" value="1"/>
</dbReference>
<dbReference type="Gene3D" id="1.20.5.300">
    <property type="match status" value="1"/>
</dbReference>
<dbReference type="InterPro" id="IPR004897">
    <property type="entry name" value="P/V_Pprotein_paramyxoviral"/>
</dbReference>
<dbReference type="InterPro" id="IPR025909">
    <property type="entry name" value="Soyouz_module"/>
</dbReference>
<dbReference type="Pfam" id="PF03210">
    <property type="entry name" value="Paramyx_P_V_C"/>
    <property type="match status" value="1"/>
</dbReference>
<dbReference type="Pfam" id="PF14313">
    <property type="entry name" value="Soyouz_module"/>
    <property type="match status" value="1"/>
</dbReference>
<comment type="function">
    <text evidence="2 3">Essential cofactor of the RNA polymerase L that plays a central role in the transcription and replication by forming the polymerase complex with RNA polymerase L and recruiting L to the genomic N-RNA template for RNA synthesis (By similarity). Also plays a central role in the encapsidation of nascent RNA chains by forming the encapsidation complex with the nucleocapsid protein N (N-P complex). Acts as a chaperone for newly synthesized free N protein, so-called N0, allowing encapsidation of nascent RNA chains during replication (By similarity). The nucleoprotein protein N prevents excessive phosphorylation of P, which leads to down-regulation of viral transcription/ replication. Participates, together with N, in the formation of viral factories (viroplasms), which are large inclusions in the host cytoplasm where replication takes place (By similarity).</text>
</comment>
<comment type="subunit">
    <text evidence="2 3">Homotetramer. Interacts (via multimerization domain) with polymerase L; this interaction forms the polymerase L-P complex (By similarity). Interacts (via N-terminus) with N0 (via Ncore); this interaction allows P to chaperon N0 to avoid N polymerization before encapsidation. Interacts (via C-terminus) with N-RNA template; this interaction positions the polymerase on the template for both transcription and replication (By similarity).</text>
</comment>
<comment type="alternative products">
    <event type="alternative initiation"/>
    <isoform>
        <id>P16073-1</id>
        <name>Long</name>
        <sequence type="displayed"/>
    </isoform>
    <isoform>
        <id>P16073-2</id>
        <name>38 kDa</name>
        <name>Non-structural protein C 38 kDa</name>
        <sequence type="described" ref="VSP_018975"/>
    </isoform>
    <isoform>
        <id>P16073-3</id>
        <name>29 kDa</name>
        <name>Non-structural protein C 29 kDa</name>
        <sequence type="described" ref="VSP_018976"/>
    </isoform>
</comment>
<comment type="domain">
    <text evidence="1 2 3">The N-terminus consists of a long intrinsically disordered tail. The central part contains the coiled-coil multimerization domain (PMD) (By similarity). Forms a four-stranded coiled coil structure (By similarity). The C-terminus constitutes the alpha-helical domain that binds to the nucleocapsid (N-RNA complex) (By similarity).</text>
</comment>
<comment type="similarity">
    <text evidence="5">Belongs to the rubulavirus/avulavirus P protein family.</text>
</comment>
<sequence>MATFTDAEIDDLFETSGTIIDSIITAQGKPVETVGRSAIPQGKTKALSAAWEKHESIQPPASQDTPDRQNRSDKQPSTPEQMTPQNSPPATSTDQPPTQAAGEAGDTQLKTGASNSLLSMLDKLSNKSSNAKKGPWSSLQEGHHQLPTQQQGSQPSRGNSQERPQNRANAAPGDRGTDANTAYHGQWEESQLSAGATPHALRSGQSQDNTPASVDHVQLPVDFVQAMMSMMEAISQRVSKVDYQLDLILKQTSSIPMMRSEIQQLKTSVAVMEANLGMMKILDPGCANVSSLSDLRAVARSHPVLVSGPGDPSPYVTQGGEMTLNKLSQPVQHPSELIKPATVGGPDIGVEKDTVRALITSRPMHPSSSAKLLSKLDAAGSIEEIRKIKRLAVNG</sequence>
<reference key="1">
    <citation type="journal article" date="1988" name="Virology">
        <title>The P protein and the nonstructural 38K and 29K proteins of Newcastle disease virus are derived from the same open reading frame.</title>
        <authorList>
            <person name="McGinnes L."/>
            <person name="McQuain C."/>
            <person name="Morrison T."/>
        </authorList>
    </citation>
    <scope>NUCLEOTIDE SEQUENCE [GENOMIC RNA]</scope>
</reference>
<gene>
    <name type="primary">P/C</name>
</gene>
<proteinExistence type="inferred from homology"/>
<evidence type="ECO:0000250" key="1">
    <source>
        <dbReference type="UniProtKB" id="P04859"/>
    </source>
</evidence>
<evidence type="ECO:0000250" key="2">
    <source>
        <dbReference type="UniProtKB" id="P06162"/>
    </source>
</evidence>
<evidence type="ECO:0000250" key="3">
    <source>
        <dbReference type="UniProtKB" id="Q77M42"/>
    </source>
</evidence>
<evidence type="ECO:0000256" key="4">
    <source>
        <dbReference type="SAM" id="MobiDB-lite"/>
    </source>
</evidence>
<evidence type="ECO:0000305" key="5"/>
<accession>P16073</accession>
<organism>
    <name type="scientific">Newcastle disease virus (strain Chicken/Australia-Victoria/32)</name>
    <name type="common">NDV</name>
    <dbReference type="NCBI Taxonomy" id="11177"/>
    <lineage>
        <taxon>Viruses</taxon>
        <taxon>Riboviria</taxon>
        <taxon>Orthornavirae</taxon>
        <taxon>Negarnaviricota</taxon>
        <taxon>Haploviricotina</taxon>
        <taxon>Monjiviricetes</taxon>
        <taxon>Mononegavirales</taxon>
        <taxon>Paramyxoviridae</taxon>
        <taxon>Avulavirinae</taxon>
        <taxon>Orthoavulavirus</taxon>
        <taxon>Orthoavulavirus javaense</taxon>
        <taxon>Avian paramyxovirus 1</taxon>
    </lineage>
</organism>
<name>PHOSP_NDVA</name>